<dbReference type="EMBL" id="AE016822">
    <property type="protein sequence ID" value="AAT88624.1"/>
    <property type="molecule type" value="Genomic_DNA"/>
</dbReference>
<dbReference type="RefSeq" id="WP_011185623.1">
    <property type="nucleotide sequence ID" value="NC_006087.1"/>
</dbReference>
<dbReference type="SMR" id="Q6AG71"/>
<dbReference type="STRING" id="281090.Lxx06910"/>
<dbReference type="KEGG" id="lxx:Lxx06910"/>
<dbReference type="eggNOG" id="COG0216">
    <property type="taxonomic scope" value="Bacteria"/>
</dbReference>
<dbReference type="HOGENOM" id="CLU_036856_0_1_11"/>
<dbReference type="Proteomes" id="UP000001306">
    <property type="component" value="Chromosome"/>
</dbReference>
<dbReference type="GO" id="GO:0005737">
    <property type="term" value="C:cytoplasm"/>
    <property type="evidence" value="ECO:0007669"/>
    <property type="project" value="UniProtKB-SubCell"/>
</dbReference>
<dbReference type="GO" id="GO:0016149">
    <property type="term" value="F:translation release factor activity, codon specific"/>
    <property type="evidence" value="ECO:0007669"/>
    <property type="project" value="UniProtKB-UniRule"/>
</dbReference>
<dbReference type="FunFam" id="3.30.160.20:FF:000004">
    <property type="entry name" value="Peptide chain release factor 1"/>
    <property type="match status" value="1"/>
</dbReference>
<dbReference type="Gene3D" id="3.30.160.20">
    <property type="match status" value="1"/>
</dbReference>
<dbReference type="Gene3D" id="3.30.70.1660">
    <property type="match status" value="1"/>
</dbReference>
<dbReference type="Gene3D" id="6.10.140.1950">
    <property type="match status" value="1"/>
</dbReference>
<dbReference type="HAMAP" id="MF_00093">
    <property type="entry name" value="Rel_fac_1"/>
    <property type="match status" value="1"/>
</dbReference>
<dbReference type="InterPro" id="IPR005139">
    <property type="entry name" value="PCRF"/>
</dbReference>
<dbReference type="InterPro" id="IPR000352">
    <property type="entry name" value="Pep_chain_release_fac_I"/>
</dbReference>
<dbReference type="InterPro" id="IPR045853">
    <property type="entry name" value="Pep_chain_release_fac_I_sf"/>
</dbReference>
<dbReference type="InterPro" id="IPR050057">
    <property type="entry name" value="Prokaryotic/Mito_RF"/>
</dbReference>
<dbReference type="InterPro" id="IPR004373">
    <property type="entry name" value="RF-1"/>
</dbReference>
<dbReference type="NCBIfam" id="TIGR00019">
    <property type="entry name" value="prfA"/>
    <property type="match status" value="1"/>
</dbReference>
<dbReference type="NCBIfam" id="NF001859">
    <property type="entry name" value="PRK00591.1"/>
    <property type="match status" value="1"/>
</dbReference>
<dbReference type="PANTHER" id="PTHR43804">
    <property type="entry name" value="LD18447P"/>
    <property type="match status" value="1"/>
</dbReference>
<dbReference type="PANTHER" id="PTHR43804:SF7">
    <property type="entry name" value="LD18447P"/>
    <property type="match status" value="1"/>
</dbReference>
<dbReference type="Pfam" id="PF03462">
    <property type="entry name" value="PCRF"/>
    <property type="match status" value="1"/>
</dbReference>
<dbReference type="Pfam" id="PF00472">
    <property type="entry name" value="RF-1"/>
    <property type="match status" value="1"/>
</dbReference>
<dbReference type="SMART" id="SM00937">
    <property type="entry name" value="PCRF"/>
    <property type="match status" value="1"/>
</dbReference>
<dbReference type="SUPFAM" id="SSF75620">
    <property type="entry name" value="Release factor"/>
    <property type="match status" value="1"/>
</dbReference>
<dbReference type="PROSITE" id="PS00745">
    <property type="entry name" value="RF_PROK_I"/>
    <property type="match status" value="1"/>
</dbReference>
<proteinExistence type="inferred from homology"/>
<name>RF1_LEIXX</name>
<accession>Q6AG71</accession>
<organism>
    <name type="scientific">Leifsonia xyli subsp. xyli (strain CTCB07)</name>
    <dbReference type="NCBI Taxonomy" id="281090"/>
    <lineage>
        <taxon>Bacteria</taxon>
        <taxon>Bacillati</taxon>
        <taxon>Actinomycetota</taxon>
        <taxon>Actinomycetes</taxon>
        <taxon>Micrococcales</taxon>
        <taxon>Microbacteriaceae</taxon>
        <taxon>Leifsonia</taxon>
    </lineage>
</organism>
<comment type="function">
    <text evidence="1">Peptide chain release factor 1 directs the termination of translation in response to the peptide chain termination codons UAG and UAA.</text>
</comment>
<comment type="subcellular location">
    <subcellularLocation>
        <location evidence="1">Cytoplasm</location>
    </subcellularLocation>
</comment>
<comment type="PTM">
    <text evidence="1">Methylated by PrmC. Methylation increases the termination efficiency of RF1.</text>
</comment>
<comment type="similarity">
    <text evidence="1">Belongs to the prokaryotic/mitochondrial release factor family.</text>
</comment>
<protein>
    <recommendedName>
        <fullName evidence="1">Peptide chain release factor 1</fullName>
        <shortName evidence="1">RF-1</shortName>
    </recommendedName>
</protein>
<keyword id="KW-0963">Cytoplasm</keyword>
<keyword id="KW-0488">Methylation</keyword>
<keyword id="KW-0648">Protein biosynthesis</keyword>
<keyword id="KW-1185">Reference proteome</keyword>
<reference key="1">
    <citation type="journal article" date="2004" name="Mol. Plant Microbe Interact.">
        <title>The genome sequence of the Gram-positive sugarcane pathogen Leifsonia xyli subsp. xyli.</title>
        <authorList>
            <person name="Monteiro-Vitorello C.B."/>
            <person name="Camargo L.E.A."/>
            <person name="Van Sluys M.A."/>
            <person name="Kitajima J.P."/>
            <person name="Truffi D."/>
            <person name="do Amaral A.M."/>
            <person name="Harakava R."/>
            <person name="de Oliveira J.C.F."/>
            <person name="Wood D."/>
            <person name="de Oliveira M.C."/>
            <person name="Miyaki C.Y."/>
            <person name="Takita M.A."/>
            <person name="da Silva A.C.R."/>
            <person name="Furlan L.R."/>
            <person name="Carraro D.M."/>
            <person name="Camarotte G."/>
            <person name="Almeida N.F. Jr."/>
            <person name="Carrer H."/>
            <person name="Coutinho L.L."/>
            <person name="El-Dorry H.A."/>
            <person name="Ferro M.I.T."/>
            <person name="Gagliardi P.R."/>
            <person name="Giglioti E."/>
            <person name="Goldman M.H.S."/>
            <person name="Goldman G.H."/>
            <person name="Kimura E.T."/>
            <person name="Ferro E.S."/>
            <person name="Kuramae E.E."/>
            <person name="Lemos E.G.M."/>
            <person name="Lemos M.V.F."/>
            <person name="Mauro S.M.Z."/>
            <person name="Machado M.A."/>
            <person name="Marino C.L."/>
            <person name="Menck C.F."/>
            <person name="Nunes L.R."/>
            <person name="Oliveira R.C."/>
            <person name="Pereira G.G."/>
            <person name="Siqueira W."/>
            <person name="de Souza A.A."/>
            <person name="Tsai S.M."/>
            <person name="Zanca A.S."/>
            <person name="Simpson A.J.G."/>
            <person name="Brumbley S.M."/>
            <person name="Setubal J.C."/>
        </authorList>
    </citation>
    <scope>NUCLEOTIDE SEQUENCE [LARGE SCALE GENOMIC DNA]</scope>
    <source>
        <strain>CTCB07</strain>
    </source>
</reference>
<feature type="chain" id="PRO_0000177690" description="Peptide chain release factor 1">
    <location>
        <begin position="1"/>
        <end position="358"/>
    </location>
</feature>
<feature type="modified residue" description="N5-methylglutamine" evidence="1">
    <location>
        <position position="234"/>
    </location>
</feature>
<sequence>MFDSVTGLIAEHDDLQQQLSDPELHSDPVRSKKVNRRYAELSRIVAAYTEWKQLTDDLEAARELAAEDDAFAAEIPGLEQGLEESEEKLRRLLIPRDPNDSRDAIMEIKMGEGGAESALFAGDLLSMYLHYADSRRWKAEIIEQTSSDLGGIKDVQVAFKGSSSDPAEGVWAHLKYEGGVHRVQRVPATESQGRIHTSAAGVLVFPEVDEPEEVEINPNDLKIDVFRSSGPGGQSVNTTDSAVRITHAPTGIVVSMQNEKSQLQNREAAMRVLRARLLAKQQEEADAEAAEFRKGQIRTMERSERIRTYNFPENRIADHRTGYKAYNLDAVMNGALGPVIESCILADEETRLANLSTD</sequence>
<gene>
    <name evidence="1" type="primary">prfA</name>
    <name type="ordered locus">Lxx06910</name>
</gene>
<evidence type="ECO:0000255" key="1">
    <source>
        <dbReference type="HAMAP-Rule" id="MF_00093"/>
    </source>
</evidence>